<reference key="1">
    <citation type="journal article" date="2005" name="Nature">
        <title>Genomic sequence of the pathogenic and allergenic filamentous fungus Aspergillus fumigatus.</title>
        <authorList>
            <person name="Nierman W.C."/>
            <person name="Pain A."/>
            <person name="Anderson M.J."/>
            <person name="Wortman J.R."/>
            <person name="Kim H.S."/>
            <person name="Arroyo J."/>
            <person name="Berriman M."/>
            <person name="Abe K."/>
            <person name="Archer D.B."/>
            <person name="Bermejo C."/>
            <person name="Bennett J.W."/>
            <person name="Bowyer P."/>
            <person name="Chen D."/>
            <person name="Collins M."/>
            <person name="Coulsen R."/>
            <person name="Davies R."/>
            <person name="Dyer P.S."/>
            <person name="Farman M.L."/>
            <person name="Fedorova N."/>
            <person name="Fedorova N.D."/>
            <person name="Feldblyum T.V."/>
            <person name="Fischer R."/>
            <person name="Fosker N."/>
            <person name="Fraser A."/>
            <person name="Garcia J.L."/>
            <person name="Garcia M.J."/>
            <person name="Goble A."/>
            <person name="Goldman G.H."/>
            <person name="Gomi K."/>
            <person name="Griffith-Jones S."/>
            <person name="Gwilliam R."/>
            <person name="Haas B.J."/>
            <person name="Haas H."/>
            <person name="Harris D.E."/>
            <person name="Horiuchi H."/>
            <person name="Huang J."/>
            <person name="Humphray S."/>
            <person name="Jimenez J."/>
            <person name="Keller N."/>
            <person name="Khouri H."/>
            <person name="Kitamoto K."/>
            <person name="Kobayashi T."/>
            <person name="Konzack S."/>
            <person name="Kulkarni R."/>
            <person name="Kumagai T."/>
            <person name="Lafton A."/>
            <person name="Latge J.-P."/>
            <person name="Li W."/>
            <person name="Lord A."/>
            <person name="Lu C."/>
            <person name="Majoros W.H."/>
            <person name="May G.S."/>
            <person name="Miller B.L."/>
            <person name="Mohamoud Y."/>
            <person name="Molina M."/>
            <person name="Monod M."/>
            <person name="Mouyna I."/>
            <person name="Mulligan S."/>
            <person name="Murphy L.D."/>
            <person name="O'Neil S."/>
            <person name="Paulsen I."/>
            <person name="Penalva M.A."/>
            <person name="Pertea M."/>
            <person name="Price C."/>
            <person name="Pritchard B.L."/>
            <person name="Quail M.A."/>
            <person name="Rabbinowitsch E."/>
            <person name="Rawlins N."/>
            <person name="Rajandream M.A."/>
            <person name="Reichard U."/>
            <person name="Renauld H."/>
            <person name="Robson G.D."/>
            <person name="Rodriguez de Cordoba S."/>
            <person name="Rodriguez-Pena J.M."/>
            <person name="Ronning C.M."/>
            <person name="Rutter S."/>
            <person name="Salzberg S.L."/>
            <person name="Sanchez M."/>
            <person name="Sanchez-Ferrero J.C."/>
            <person name="Saunders D."/>
            <person name="Seeger K."/>
            <person name="Squares R."/>
            <person name="Squares S."/>
            <person name="Takeuchi M."/>
            <person name="Tekaia F."/>
            <person name="Turner G."/>
            <person name="Vazquez de Aldana C.R."/>
            <person name="Weidman J."/>
            <person name="White O."/>
            <person name="Woodward J.R."/>
            <person name="Yu J.-H."/>
            <person name="Fraser C.M."/>
            <person name="Galagan J.E."/>
            <person name="Asai K."/>
            <person name="Machida M."/>
            <person name="Hall N."/>
            <person name="Barrell B.G."/>
            <person name="Denning D.W."/>
        </authorList>
    </citation>
    <scope>NUCLEOTIDE SEQUENCE [LARGE SCALE GENOMIC DNA]</scope>
    <source>
        <strain>ATCC MYA-4609 / CBS 101355 / FGSC A1100 / Af293</strain>
    </source>
</reference>
<reference key="2">
    <citation type="journal article" date="2005" name="Appl. Environ. Microbiol.">
        <title>An ergot alkaloid biosynthesis gene and clustered hypothetical genes from Aspergillus fumigatus.</title>
        <authorList>
            <person name="Coyle C.M."/>
            <person name="Panaccione D.G."/>
        </authorList>
    </citation>
    <scope>IDENTIFICATION</scope>
    <scope>FUNCTION</scope>
</reference>
<reference key="3">
    <citation type="journal article" date="2005" name="Microbiology">
        <title>Overproduction, purification and characterization of FgaPT2, a dimethylallyltryptophan synthase from Aspergillus fumigatus.</title>
        <authorList>
            <person name="Unsoeld I.A."/>
            <person name="Li S.-M."/>
        </authorList>
    </citation>
    <scope>FUNCTION</scope>
</reference>
<reference key="4">
    <citation type="journal article" date="2009" name="ChemBioChem">
        <title>Ergot alkaloid biosynthesis in Aspergillus fumigatus: FgaAT catalyses the acetylation of fumigaclavine B.</title>
        <authorList>
            <person name="Liu X."/>
            <person name="Wang L."/>
            <person name="Steffan N."/>
            <person name="Yin W.B."/>
            <person name="Li S.M."/>
        </authorList>
    </citation>
    <scope>FUNCTION</scope>
</reference>
<reference key="5">
    <citation type="journal article" date="2009" name="Eukaryot. Cell">
        <title>Transcriptional profiling identifies a role for BrlA in the response to nitrogen depletion and for StuA in the regulation of secondary metabolite clusters in Aspergillus fumigatus.</title>
        <authorList>
            <person name="Twumasi-Boateng K."/>
            <person name="Yu Y."/>
            <person name="Chen D."/>
            <person name="Gravelat F.N."/>
            <person name="Nierman W.C."/>
            <person name="Sheppard D.C."/>
        </authorList>
    </citation>
    <scope>INDUCTION</scope>
</reference>
<reference key="6">
    <citation type="journal article" date="2009" name="Mol. Plant Pathol.">
        <title>Ergot: from witchcraft to biotechnology.</title>
        <authorList>
            <person name="Haarmann T."/>
            <person name="Rolke Y."/>
            <person name="Giesbert S."/>
            <person name="Tudzynski P."/>
        </authorList>
    </citation>
    <scope>BIOTECHNOLOGY</scope>
</reference>
<reference key="7">
    <citation type="journal article" date="2010" name="Arch. Microbiol.">
        <title>Ergot alkaloid biosynthesis in Aspergillus fumigatus: conversion of chanoclavine-I to chanoclavine-I aldehyde catalyzed by a short-chain alcohol dehydrogenase FgaDH.</title>
        <authorList>
            <person name="Wallwey C."/>
            <person name="Matuschek M."/>
            <person name="Li S.M."/>
        </authorList>
    </citation>
    <scope>FUNCTION</scope>
</reference>
<reference key="8">
    <citation type="journal article" date="2010" name="Org. Biomol. Chem.">
        <title>Ergot alkaloid biosynthesis in Aspergillus fumigatus: Conversion of chanoclavine-I aldehyde to festuclavine by the festuclavine synthase FgaFS in the presence of the old yellow enzyme FgaOx3.</title>
        <authorList>
            <person name="Wallwey C."/>
            <person name="Matuschek M."/>
            <person name="Xie X.L."/>
            <person name="Li S.M."/>
        </authorList>
    </citation>
    <scope>FUNCTION</scope>
    <scope>NOMENCLATURE</scope>
</reference>
<reference key="9">
    <citation type="journal article" date="2011" name="Curr. Genet.">
        <title>Ergot cluster-encoded catalase is required for synthesis of chanoclavine-I in Aspergillus fumigatus.</title>
        <authorList>
            <person name="Goetz K.E."/>
            <person name="Coyle C.M."/>
            <person name="Cheng J.Z."/>
            <person name="O'Connor S.E."/>
            <person name="Panaccione D.G."/>
        </authorList>
    </citation>
    <scope>FUNCTION</scope>
</reference>
<reference key="10">
    <citation type="journal article" date="2012" name="Mycologia">
        <title>Chemotypic and genotypic diversity in the ergot alkaloid pathway of Aspergillus fumigatus.</title>
        <authorList>
            <person name="Robinson S.L."/>
            <person name="Panaccione D.G."/>
        </authorList>
    </citation>
    <scope>IDENTIFICATION</scope>
    <scope>NOMENCLATURE</scope>
</reference>
<reference key="11">
    <citation type="journal article" date="2013" name="Toxins">
        <title>Partial reconstruction of the ergot alkaloid pathway by heterologous gene expression in Aspergillus nidulans.</title>
        <authorList>
            <person name="Ryan K.L."/>
            <person name="Moore C.T."/>
            <person name="Panaccione D.G."/>
        </authorList>
    </citation>
    <scope>FUNCTION</scope>
    <scope>PATHWAY</scope>
</reference>
<reference key="12">
    <citation type="journal article" date="2016" name="Curr. Genet.">
        <title>Functional analysis of the gene controlling hydroxylation of festuclavine in the ergot alkaloid pathway of Neosartorya fumigata.</title>
        <authorList>
            <person name="Bilovol Y."/>
            <person name="Panaccione D.G."/>
        </authorList>
    </citation>
    <scope>FUNCTION</scope>
</reference>
<name>EASF_ASPFU</name>
<protein>
    <recommendedName>
        <fullName evidence="14">4-dimethylallyltryptophan N-methyltransferase easF</fullName>
        <ecNumber>2.1.1.261</ecNumber>
    </recommendedName>
    <alternativeName>
        <fullName evidence="14">4-dimethylallyltryptophan methyltransferase</fullName>
    </alternativeName>
    <alternativeName>
        <fullName evidence="13">Ergot alkaloid synthesis protein F</fullName>
    </alternativeName>
</protein>
<accession>Q4WZ60</accession>
<organism>
    <name type="scientific">Aspergillus fumigatus (strain ATCC MYA-4609 / CBS 101355 / FGSC A1100 / Af293)</name>
    <name type="common">Neosartorya fumigata</name>
    <dbReference type="NCBI Taxonomy" id="330879"/>
    <lineage>
        <taxon>Eukaryota</taxon>
        <taxon>Fungi</taxon>
        <taxon>Dikarya</taxon>
        <taxon>Ascomycota</taxon>
        <taxon>Pezizomycotina</taxon>
        <taxon>Eurotiomycetes</taxon>
        <taxon>Eurotiomycetidae</taxon>
        <taxon>Eurotiales</taxon>
        <taxon>Aspergillaceae</taxon>
        <taxon>Aspergillus</taxon>
        <taxon>Aspergillus subgen. Fumigati</taxon>
    </lineage>
</organism>
<proteinExistence type="evidence at transcript level"/>
<feature type="chain" id="PRO_0000421752" description="4-dimethylallyltryptophan N-methyltransferase easF">
    <location>
        <begin position="1"/>
        <end position="339"/>
    </location>
</feature>
<dbReference type="EC" id="2.1.1.261"/>
<dbReference type="EMBL" id="AAHF01000001">
    <property type="protein sequence ID" value="EAL94105.1"/>
    <property type="molecule type" value="Genomic_DNA"/>
</dbReference>
<dbReference type="RefSeq" id="XP_756143.1">
    <property type="nucleotide sequence ID" value="XM_751050.1"/>
</dbReference>
<dbReference type="SMR" id="Q4WZ60"/>
<dbReference type="STRING" id="330879.Q4WZ60"/>
<dbReference type="EnsemblFungi" id="EAL94105">
    <property type="protein sequence ID" value="EAL94105"/>
    <property type="gene ID" value="AFUA_2G18060"/>
</dbReference>
<dbReference type="GeneID" id="3512718"/>
<dbReference type="KEGG" id="afm:AFUA_2G18060"/>
<dbReference type="VEuPathDB" id="FungiDB:Afu2g18060"/>
<dbReference type="eggNOG" id="ENOG502SISP">
    <property type="taxonomic scope" value="Eukaryota"/>
</dbReference>
<dbReference type="HOGENOM" id="CLU_049766_0_2_1"/>
<dbReference type="InParanoid" id="Q4WZ60"/>
<dbReference type="OMA" id="FGCSYKY"/>
<dbReference type="OrthoDB" id="659at2759"/>
<dbReference type="BRENDA" id="2.1.1.261">
    <property type="organism ID" value="508"/>
</dbReference>
<dbReference type="UniPathway" id="UPA00327"/>
<dbReference type="Proteomes" id="UP000002530">
    <property type="component" value="Chromosome 2"/>
</dbReference>
<dbReference type="GO" id="GO:0008168">
    <property type="term" value="F:methyltransferase activity"/>
    <property type="evidence" value="ECO:0000250"/>
    <property type="project" value="UniProtKB"/>
</dbReference>
<dbReference type="GO" id="GO:0042803">
    <property type="term" value="F:protein homodimerization activity"/>
    <property type="evidence" value="ECO:0000250"/>
    <property type="project" value="UniProtKB"/>
</dbReference>
<dbReference type="GO" id="GO:0035837">
    <property type="term" value="P:ergot alkaloid biosynthetic process"/>
    <property type="evidence" value="ECO:0000250"/>
    <property type="project" value="UniProtKB"/>
</dbReference>
<dbReference type="GO" id="GO:1900809">
    <property type="term" value="P:fumigaclavine C biosynthetic process"/>
    <property type="evidence" value="ECO:0000314"/>
    <property type="project" value="GO_Central"/>
</dbReference>
<dbReference type="GO" id="GO:0032259">
    <property type="term" value="P:methylation"/>
    <property type="evidence" value="ECO:0007669"/>
    <property type="project" value="UniProtKB-KW"/>
</dbReference>
<dbReference type="Gene3D" id="3.40.50.150">
    <property type="entry name" value="Vaccinia Virus protein VP39"/>
    <property type="match status" value="1"/>
</dbReference>
<dbReference type="InterPro" id="IPR051128">
    <property type="entry name" value="EgtD_Methyltrsf_superfamily"/>
</dbReference>
<dbReference type="InterPro" id="IPR019257">
    <property type="entry name" value="MeTrfase_dom"/>
</dbReference>
<dbReference type="InterPro" id="IPR017804">
    <property type="entry name" value="MeTrfase_EgtD-like"/>
</dbReference>
<dbReference type="InterPro" id="IPR029063">
    <property type="entry name" value="SAM-dependent_MTases_sf"/>
</dbReference>
<dbReference type="InterPro" id="IPR017805">
    <property type="entry name" value="SAM_MeTrfase_EasF-type_put"/>
</dbReference>
<dbReference type="NCBIfam" id="TIGR03439">
    <property type="entry name" value="methyl_EasF"/>
    <property type="match status" value="1"/>
</dbReference>
<dbReference type="PANTHER" id="PTHR43397">
    <property type="entry name" value="ERGOTHIONEINE BIOSYNTHESIS PROTEIN 1"/>
    <property type="match status" value="1"/>
</dbReference>
<dbReference type="PANTHER" id="PTHR43397:SF1">
    <property type="entry name" value="ERGOTHIONEINE BIOSYNTHESIS PROTEIN 1"/>
    <property type="match status" value="1"/>
</dbReference>
<dbReference type="Pfam" id="PF10017">
    <property type="entry name" value="Methyltransf_33"/>
    <property type="match status" value="1"/>
</dbReference>
<dbReference type="PIRSF" id="PIRSF018005">
    <property type="entry name" value="UCP018005"/>
    <property type="match status" value="1"/>
</dbReference>
<evidence type="ECO:0000250" key="1"/>
<evidence type="ECO:0000250" key="2">
    <source>
        <dbReference type="UniProtKB" id="B6D5I7"/>
    </source>
</evidence>
<evidence type="ECO:0000269" key="3">
    <source>
    </source>
</evidence>
<evidence type="ECO:0000269" key="4">
    <source>
    </source>
</evidence>
<evidence type="ECO:0000269" key="5">
    <source>
    </source>
</evidence>
<evidence type="ECO:0000269" key="6">
    <source>
    </source>
</evidence>
<evidence type="ECO:0000269" key="7">
    <source>
    </source>
</evidence>
<evidence type="ECO:0000269" key="8">
    <source>
    </source>
</evidence>
<evidence type="ECO:0000269" key="9">
    <source>
    </source>
</evidence>
<evidence type="ECO:0000269" key="10">
    <source>
    </source>
</evidence>
<evidence type="ECO:0000269" key="11">
    <source>
    </source>
</evidence>
<evidence type="ECO:0000303" key="12">
    <source>
    </source>
</evidence>
<evidence type="ECO:0000303" key="13">
    <source>
    </source>
</evidence>
<evidence type="ECO:0000305" key="14"/>
<evidence type="ECO:0000305" key="15">
    <source>
    </source>
</evidence>
<comment type="function">
    <text evidence="2 3 4 6 7 8 9 10 11">4-dimethylallyltryptophan N-methyltransferase; part of the gene cluster that mediates the biosynthesis of fumiclavanine C, a fungal ergot alkaloid (PubMed:15933009, PubMed:23435153, PubMed:26972831). DmaW catalyzes the first step of ergot alkaloid biosynthesis by condensing dimethylallyl diphosphate (DMAP) and tryptophan to form 4-dimethylallyl-L-tryptophan (PubMed:15870460). The second step is catalyzed by the methyltransferase easF that methylates 4-dimethylallyl-L-tryptophan in the presence of S-adenosyl-L-methionine, resulting in the formation of 4-dimethylallyl-L-abrine (By similarity). The catalase easC and the FAD-dependent oxidoreductase easE then transform 4-dimethylallyl-L-abrine to chanoclavine-I which is further oxidized by EasD in the presence of NAD(+), resulting in the formation of chanoclavine-I aldehyde (PubMed:20039019, PubMed:20526482, PubMed:21409592). EasA reduces chanoclavine-I aldehyde to dihydrochanoclavine-I aldehyde that spontaneously dehydrates to form 6,8-dimethyl-6,7-didehydroergoline (PubMed:20526482). EasG then catalyzes the reduction of 6,8-dimethyl-6,7-didehydroergoline to form festuclavine (PubMed:20526482). Hydrolysis of festuclavine by easM then leads to the formation of fumigaclavine B which is in turn acetylated by easN to fumigaclavine A (PubMed:26972831). Finally, easL catalyzes the conversion of fumigaclavine A into fumigaclavine C by attaching a dimethylallyl moiety to C-2 of the indole nucleus (PubMed:19672909).</text>
</comment>
<comment type="catalytic activity">
    <reaction>
        <text>4-(3-methylbut-2-enyl)-L-tryptophan + S-adenosyl-L-methionine = 4-(3-methylbut-2-enyl)-L-abrine + S-adenosyl-L-homocysteine + H(+)</text>
        <dbReference type="Rhea" id="RHEA:34435"/>
        <dbReference type="ChEBI" id="CHEBI:15378"/>
        <dbReference type="ChEBI" id="CHEBI:57856"/>
        <dbReference type="ChEBI" id="CHEBI:58209"/>
        <dbReference type="ChEBI" id="CHEBI:59789"/>
        <dbReference type="ChEBI" id="CHEBI:67248"/>
        <dbReference type="EC" id="2.1.1.261"/>
    </reaction>
</comment>
<comment type="pathway">
    <text evidence="10">Alkaloid biosynthesis; ergot alkaloid biosynthesis.</text>
</comment>
<comment type="subunit">
    <text evidence="1">Homodimer.</text>
</comment>
<comment type="induction">
    <text evidence="5">The expression of the ergot alkaloid synthesis cluster which leads to the synthesis of fumigaclavines is positively regulated by the brlA and stuA transcription factors (PubMed:19028996).</text>
</comment>
<comment type="biotechnology">
    <text evidence="15">Ergot alkaloids are known for their toxic effects on humans who consume contaminated grains or livestock that graze on grasses harboring ergot alkaloid-producing fungi (PubMed:19523108). Due to their strong affinity for monoamine neurotransmitter receptors they may also have clinical uses such as treatment of migraines, Parkinson's disease and cerebrovascular insufficiency (PubMed:19523108).</text>
</comment>
<comment type="similarity">
    <text evidence="14">Belongs to the methyltransferase superfamily.</text>
</comment>
<gene>
    <name evidence="13" type="primary">easF</name>
    <name evidence="12" type="synonym">fgaMT</name>
    <name type="ORF">AFUA_2G18060</name>
</gene>
<sequence length="339" mass="38094">MTISAPPIIDIRQAGLESSIPDQVVEGLTKEVKTLPALLFYSTKGIQHWNRHSHAADFYPRHEELCILKAEASKMAASIAQDSLVIDMGSASMDKVILLLEALEEQKKSITYYALDLSYSELASNFQAIPVDRFHYVRFAALHGTFDDGLHWLQNAPDIRNRPRCILLFGLTIGNFSRDNAASFLRNIAQSALSTSPTQSSIIVSLDSCKLPTKILRAYTADGVVPFALASLSYANSLFHPKGDRKIFNEEDWYFHSEWNHALGRHEASLITQSKDIQLGAPLETVIVRRDEKIRFGCSYKYDKAERDQLFHSAGLEDAAVWTAPDCDVAFYQLRLRLN</sequence>
<keyword id="KW-0017">Alkaloid metabolism</keyword>
<keyword id="KW-0489">Methyltransferase</keyword>
<keyword id="KW-1185">Reference proteome</keyword>
<keyword id="KW-0949">S-adenosyl-L-methionine</keyword>
<keyword id="KW-0808">Transferase</keyword>